<evidence type="ECO:0000255" key="1">
    <source>
        <dbReference type="HAMAP-Rule" id="MF_01001"/>
    </source>
</evidence>
<organism>
    <name type="scientific">Salmonella paratyphi C (strain RKS4594)</name>
    <dbReference type="NCBI Taxonomy" id="476213"/>
    <lineage>
        <taxon>Bacteria</taxon>
        <taxon>Pseudomonadati</taxon>
        <taxon>Pseudomonadota</taxon>
        <taxon>Gammaproteobacteria</taxon>
        <taxon>Enterobacterales</taxon>
        <taxon>Enterobacteriaceae</taxon>
        <taxon>Salmonella</taxon>
    </lineage>
</organism>
<dbReference type="EC" id="2.4.1.180" evidence="1"/>
<dbReference type="EMBL" id="CP000857">
    <property type="protein sequence ID" value="ACN48110.1"/>
    <property type="molecule type" value="Genomic_DNA"/>
</dbReference>
<dbReference type="RefSeq" id="WP_000183617.1">
    <property type="nucleotide sequence ID" value="NC_012125.1"/>
</dbReference>
<dbReference type="SMR" id="C0Q3A8"/>
<dbReference type="CAZy" id="GT26">
    <property type="family name" value="Glycosyltransferase Family 26"/>
</dbReference>
<dbReference type="KEGG" id="sei:SPC_4043"/>
<dbReference type="HOGENOM" id="CLU_063203_3_2_6"/>
<dbReference type="UniPathway" id="UPA00566"/>
<dbReference type="Proteomes" id="UP000001599">
    <property type="component" value="Chromosome"/>
</dbReference>
<dbReference type="GO" id="GO:0047241">
    <property type="term" value="F:lipopolysaccharide N-acetylmannosaminouronosyltransferase activity"/>
    <property type="evidence" value="ECO:0007669"/>
    <property type="project" value="UniProtKB-UniRule"/>
</dbReference>
<dbReference type="GO" id="GO:0009246">
    <property type="term" value="P:enterobacterial common antigen biosynthetic process"/>
    <property type="evidence" value="ECO:0007669"/>
    <property type="project" value="UniProtKB-UniRule"/>
</dbReference>
<dbReference type="CDD" id="cd06533">
    <property type="entry name" value="Glyco_transf_WecG_TagA"/>
    <property type="match status" value="1"/>
</dbReference>
<dbReference type="HAMAP" id="MF_01001">
    <property type="entry name" value="WecG_RffM"/>
    <property type="match status" value="1"/>
</dbReference>
<dbReference type="InterPro" id="IPR023085">
    <property type="entry name" value="UDP-ManNAcA_Trfase_WecG"/>
</dbReference>
<dbReference type="InterPro" id="IPR004629">
    <property type="entry name" value="WecG_TagA_CpsF"/>
</dbReference>
<dbReference type="NCBIfam" id="NF002980">
    <property type="entry name" value="PRK03692.1"/>
    <property type="match status" value="1"/>
</dbReference>
<dbReference type="NCBIfam" id="TIGR00696">
    <property type="entry name" value="wecG_tagA_cpsF"/>
    <property type="match status" value="1"/>
</dbReference>
<dbReference type="PANTHER" id="PTHR34136">
    <property type="match status" value="1"/>
</dbReference>
<dbReference type="PANTHER" id="PTHR34136:SF1">
    <property type="entry name" value="UDP-N-ACETYL-D-MANNOSAMINURONIC ACID TRANSFERASE"/>
    <property type="match status" value="1"/>
</dbReference>
<dbReference type="Pfam" id="PF03808">
    <property type="entry name" value="Glyco_tran_WecG"/>
    <property type="match status" value="1"/>
</dbReference>
<accession>C0Q3A8</accession>
<keyword id="KW-0328">Glycosyltransferase</keyword>
<keyword id="KW-0808">Transferase</keyword>
<gene>
    <name evidence="1" type="primary">wecG</name>
    <name evidence="1" type="synonym">rffM</name>
    <name type="ordered locus">SPC_4043</name>
</gene>
<comment type="function">
    <text evidence="1">Catalyzes the synthesis of Und-PP-GlcNAc-ManNAcA (Lipid II), the second lipid-linked intermediate involved in enterobacterial common antigen (ECA) synthesis.</text>
</comment>
<comment type="catalytic activity">
    <reaction evidence="1">
        <text>UDP-N-acetyl-alpha-D-mannosaminouronate + N-acetyl-alpha-D-glucosaminyl-di-trans,octa-cis-undecaprenyl diphosphate = beta-D-ManNAcA-(1-&gt;4)-alpha-D-GlcNAc-di-trans,octa-cis-undecaprenyl diphosphate + UDP + H(+)</text>
        <dbReference type="Rhea" id="RHEA:28366"/>
        <dbReference type="ChEBI" id="CHEBI:15378"/>
        <dbReference type="ChEBI" id="CHEBI:58223"/>
        <dbReference type="ChEBI" id="CHEBI:61495"/>
        <dbReference type="ChEBI" id="CHEBI:62959"/>
        <dbReference type="ChEBI" id="CHEBI:70731"/>
        <dbReference type="EC" id="2.4.1.180"/>
    </reaction>
</comment>
<comment type="pathway">
    <text evidence="1">Bacterial outer membrane biogenesis; enterobacterial common antigen biosynthesis.</text>
</comment>
<comment type="similarity">
    <text evidence="1">Belongs to the glycosyltransferase 26 family.</text>
</comment>
<sequence length="246" mass="27571">MTNNAAAPLYSLRGLPLIGWRDMSHALNYLFADGQLKQGTLVAINAEKLLTAEDNPEVRALIAAAEFKYADGISVVRSIRKKFPQAQVSRVAGADLWEALMARAGKEGTPVFLVGGKPEVLAQTEAKLRTQWNVNIVGSQDGYFTPEQRQALFARIHASGAKIVTVAMGSPKQELLMRDCREVHPHALYMGVGGTYDVFTGHVKRAPKIWQNLGLEWLYRLLSQPKRITRQMRLLRYLRWHYTGDL</sequence>
<proteinExistence type="inferred from homology"/>
<feature type="chain" id="PRO_1000148782" description="UDP-N-acetyl-D-mannosaminuronic acid transferase">
    <location>
        <begin position="1"/>
        <end position="246"/>
    </location>
</feature>
<protein>
    <recommendedName>
        <fullName evidence="1">UDP-N-acetyl-D-mannosaminuronic acid transferase</fullName>
        <shortName evidence="1">UDP-ManNAcA transferase</shortName>
        <ecNumber evidence="1">2.4.1.180</ecNumber>
    </recommendedName>
</protein>
<reference key="1">
    <citation type="journal article" date="2009" name="PLoS ONE">
        <title>Salmonella paratyphi C: genetic divergence from Salmonella choleraesuis and pathogenic convergence with Salmonella typhi.</title>
        <authorList>
            <person name="Liu W.-Q."/>
            <person name="Feng Y."/>
            <person name="Wang Y."/>
            <person name="Zou Q.-H."/>
            <person name="Chen F."/>
            <person name="Guo J.-T."/>
            <person name="Peng Y.-H."/>
            <person name="Jin Y."/>
            <person name="Li Y.-G."/>
            <person name="Hu S.-N."/>
            <person name="Johnston R.N."/>
            <person name="Liu G.-R."/>
            <person name="Liu S.-L."/>
        </authorList>
    </citation>
    <scope>NUCLEOTIDE SEQUENCE [LARGE SCALE GENOMIC DNA]</scope>
    <source>
        <strain>RKS4594</strain>
    </source>
</reference>
<name>WECG_SALPC</name>